<protein>
    <recommendedName>
        <fullName evidence="1">Cell cycle protein GpsB</fullName>
    </recommendedName>
    <alternativeName>
        <fullName evidence="1">Guiding PBP1-shuttling protein</fullName>
    </alternativeName>
</protein>
<organism>
    <name type="scientific">Latilactobacillus sakei subsp. sakei (strain 23K)</name>
    <name type="common">Lactobacillus sakei subsp. sakei</name>
    <dbReference type="NCBI Taxonomy" id="314315"/>
    <lineage>
        <taxon>Bacteria</taxon>
        <taxon>Bacillati</taxon>
        <taxon>Bacillota</taxon>
        <taxon>Bacilli</taxon>
        <taxon>Lactobacillales</taxon>
        <taxon>Lactobacillaceae</taxon>
        <taxon>Latilactobacillus</taxon>
    </lineage>
</organism>
<comment type="function">
    <text evidence="1">Divisome component that associates with the complex late in its assembly, after the Z-ring is formed, and is dependent on DivIC and PBP2B for its recruitment to the divisome. Together with EzrA, is a key component of the system that regulates PBP1 localization during cell cycle progression. Its main role could be the removal of PBP1 from the cell pole after pole maturation is completed. Also contributes to the recruitment of PBP1 to the division complex. Not essential for septum formation.</text>
</comment>
<comment type="subunit">
    <text evidence="1">Forms polymers through the coiled coil domains. Interacts with PBP1, MreC and EzrA.</text>
</comment>
<comment type="subcellular location">
    <subcellularLocation>
        <location evidence="1">Cytoplasm</location>
    </subcellularLocation>
    <text evidence="1">Shuttles between the lateral wall and the division site in a cell cycle-dependent manner.</text>
</comment>
<comment type="similarity">
    <text evidence="1">Belongs to the GpsB family.</text>
</comment>
<keyword id="KW-0131">Cell cycle</keyword>
<keyword id="KW-0132">Cell division</keyword>
<keyword id="KW-0133">Cell shape</keyword>
<keyword id="KW-0175">Coiled coil</keyword>
<keyword id="KW-0963">Cytoplasm</keyword>
<keyword id="KW-1185">Reference proteome</keyword>
<accession>Q38X59</accession>
<name>GPSB_LATSS</name>
<feature type="chain" id="PRO_0000337923" description="Cell cycle protein GpsB">
    <location>
        <begin position="1"/>
        <end position="126"/>
    </location>
</feature>
<feature type="coiled-coil region" evidence="1">
    <location>
        <begin position="35"/>
        <end position="72"/>
    </location>
</feature>
<gene>
    <name evidence="1" type="primary">gpsB</name>
    <name type="ordered locus">LCA_0920</name>
</gene>
<reference key="1">
    <citation type="journal article" date="2005" name="Nat. Biotechnol.">
        <title>The complete genome sequence of the meat-borne lactic acid bacterium Lactobacillus sakei 23K.</title>
        <authorList>
            <person name="Chaillou S."/>
            <person name="Champomier-Verges M.-C."/>
            <person name="Cornet M."/>
            <person name="Crutz-Le Coq A.-M."/>
            <person name="Dudez A.-M."/>
            <person name="Martin V."/>
            <person name="Beaufils S."/>
            <person name="Darbon-Rongere E."/>
            <person name="Bossy R."/>
            <person name="Loux V."/>
            <person name="Zagorec M."/>
        </authorList>
    </citation>
    <scope>NUCLEOTIDE SEQUENCE [LARGE SCALE GENOMIC DNA]</scope>
    <source>
        <strain>23K</strain>
    </source>
</reference>
<dbReference type="EMBL" id="CR936503">
    <property type="protein sequence ID" value="CAI55222.1"/>
    <property type="molecule type" value="Genomic_DNA"/>
</dbReference>
<dbReference type="RefSeq" id="WP_011374622.1">
    <property type="nucleotide sequence ID" value="NC_007576.1"/>
</dbReference>
<dbReference type="SMR" id="Q38X59"/>
<dbReference type="STRING" id="314315.LCA_0920"/>
<dbReference type="KEGG" id="lsa:LCA_0920"/>
<dbReference type="eggNOG" id="COG3599">
    <property type="taxonomic scope" value="Bacteria"/>
</dbReference>
<dbReference type="HOGENOM" id="CLU_140309_1_0_9"/>
<dbReference type="OrthoDB" id="389699at2"/>
<dbReference type="Proteomes" id="UP000002707">
    <property type="component" value="Chromosome"/>
</dbReference>
<dbReference type="GO" id="GO:0005737">
    <property type="term" value="C:cytoplasm"/>
    <property type="evidence" value="ECO:0007669"/>
    <property type="project" value="UniProtKB-SubCell"/>
</dbReference>
<dbReference type="GO" id="GO:0051301">
    <property type="term" value="P:cell division"/>
    <property type="evidence" value="ECO:0007669"/>
    <property type="project" value="UniProtKB-UniRule"/>
</dbReference>
<dbReference type="GO" id="GO:0008360">
    <property type="term" value="P:regulation of cell shape"/>
    <property type="evidence" value="ECO:0007669"/>
    <property type="project" value="UniProtKB-UniRule"/>
</dbReference>
<dbReference type="Gene3D" id="6.10.250.660">
    <property type="match status" value="1"/>
</dbReference>
<dbReference type="HAMAP" id="MF_02011">
    <property type="entry name" value="GpsB"/>
    <property type="match status" value="1"/>
</dbReference>
<dbReference type="InterPro" id="IPR011229">
    <property type="entry name" value="Cell_cycle_GpsB"/>
</dbReference>
<dbReference type="InterPro" id="IPR019933">
    <property type="entry name" value="DivIVA_domain"/>
</dbReference>
<dbReference type="InterPro" id="IPR007793">
    <property type="entry name" value="DivIVA_fam"/>
</dbReference>
<dbReference type="NCBIfam" id="TIGR03544">
    <property type="entry name" value="DivI1A_domain"/>
    <property type="match status" value="1"/>
</dbReference>
<dbReference type="NCBIfam" id="NF010725">
    <property type="entry name" value="PRK14127.1"/>
    <property type="match status" value="1"/>
</dbReference>
<dbReference type="PANTHER" id="PTHR35794:SF1">
    <property type="entry name" value="CELL CYCLE PROTEIN GPSB"/>
    <property type="match status" value="1"/>
</dbReference>
<dbReference type="PANTHER" id="PTHR35794">
    <property type="entry name" value="CELL DIVISION PROTEIN DIVIVA"/>
    <property type="match status" value="1"/>
</dbReference>
<dbReference type="Pfam" id="PF05103">
    <property type="entry name" value="DivIVA"/>
    <property type="match status" value="1"/>
</dbReference>
<dbReference type="PIRSF" id="PIRSF029938">
    <property type="entry name" value="UCP029938"/>
    <property type="match status" value="1"/>
</dbReference>
<evidence type="ECO:0000255" key="1">
    <source>
        <dbReference type="HAMAP-Rule" id="MF_02011"/>
    </source>
</evidence>
<proteinExistence type="inferred from homology"/>
<sequence>MDNQLEIELNPTEILKKEFKSKMRGYDPEEVDGYLDLVIKDYQTYQENIDRLTADNTRLFNKVEELNRQLSASDSVKEVKPQQASAATNYDILKRLSNLERHVFGAKLSDQNGAAQTRVQNHSQFD</sequence>